<feature type="transit peptide" description="Chloroplast" evidence="2">
    <location>
        <begin position="1"/>
        <end position="31"/>
    </location>
</feature>
<feature type="chain" id="PRO_0000439871" description="Small RNA-binding protein 11, chloroplastic">
    <location>
        <begin position="32"/>
        <end position="146"/>
    </location>
</feature>
<feature type="domain" description="RRM" evidence="3">
    <location>
        <begin position="34"/>
        <end position="112"/>
    </location>
</feature>
<feature type="modified residue" description="Phosphoserine" evidence="1">
    <location>
        <position position="42"/>
    </location>
</feature>
<name>RBP11_ARATH</name>
<dbReference type="EMBL" id="AP002544">
    <property type="protein sequence ID" value="BAB09686.1"/>
    <property type="molecule type" value="Genomic_DNA"/>
</dbReference>
<dbReference type="EMBL" id="CP002688">
    <property type="protein sequence ID" value="AED90984.1"/>
    <property type="molecule type" value="Genomic_DNA"/>
</dbReference>
<dbReference type="EMBL" id="AY062714">
    <property type="protein sequence ID" value="AAL32792.1"/>
    <property type="molecule type" value="mRNA"/>
</dbReference>
<dbReference type="EMBL" id="AY093349">
    <property type="protein sequence ID" value="AAM13348.1"/>
    <property type="molecule type" value="mRNA"/>
</dbReference>
<dbReference type="EMBL" id="AY087577">
    <property type="protein sequence ID" value="AAM65119.1"/>
    <property type="molecule type" value="mRNA"/>
</dbReference>
<dbReference type="RefSeq" id="NP_196239.1">
    <property type="nucleotide sequence ID" value="NM_120703.3"/>
</dbReference>
<dbReference type="SMR" id="Q9FFZ6"/>
<dbReference type="FunCoup" id="Q9FFZ6">
    <property type="interactions" value="832"/>
</dbReference>
<dbReference type="STRING" id="3702.Q9FFZ6"/>
<dbReference type="iPTMnet" id="Q9FFZ6"/>
<dbReference type="PaxDb" id="3702-AT5G06210.1"/>
<dbReference type="ProteomicsDB" id="236529"/>
<dbReference type="EnsemblPlants" id="AT5G06210.1">
    <property type="protein sequence ID" value="AT5G06210.1"/>
    <property type="gene ID" value="AT5G06210"/>
</dbReference>
<dbReference type="GeneID" id="830508"/>
<dbReference type="Gramene" id="AT5G06210.1">
    <property type="protein sequence ID" value="AT5G06210.1"/>
    <property type="gene ID" value="AT5G06210"/>
</dbReference>
<dbReference type="KEGG" id="ath:AT5G06210"/>
<dbReference type="Araport" id="AT5G06210"/>
<dbReference type="TAIR" id="AT5G06210">
    <property type="gene designation" value="S-RBP11"/>
</dbReference>
<dbReference type="eggNOG" id="KOG0118">
    <property type="taxonomic scope" value="Eukaryota"/>
</dbReference>
<dbReference type="HOGENOM" id="CLU_012062_28_4_1"/>
<dbReference type="InParanoid" id="Q9FFZ6"/>
<dbReference type="OMA" id="ENAMAEM"/>
<dbReference type="OrthoDB" id="439808at2759"/>
<dbReference type="PhylomeDB" id="Q9FFZ6"/>
<dbReference type="PRO" id="PR:Q9FFZ6"/>
<dbReference type="Proteomes" id="UP000006548">
    <property type="component" value="Chromosome 5"/>
</dbReference>
<dbReference type="ExpressionAtlas" id="Q9FFZ6">
    <property type="expression patterns" value="baseline and differential"/>
</dbReference>
<dbReference type="GO" id="GO:0009507">
    <property type="term" value="C:chloroplast"/>
    <property type="evidence" value="ECO:0000314"/>
    <property type="project" value="UniProtKB"/>
</dbReference>
<dbReference type="GO" id="GO:0003723">
    <property type="term" value="F:RNA binding"/>
    <property type="evidence" value="ECO:0007669"/>
    <property type="project" value="UniProtKB-KW"/>
</dbReference>
<dbReference type="GO" id="GO:1901002">
    <property type="term" value="P:positive regulation of response to salt stress"/>
    <property type="evidence" value="ECO:0000315"/>
    <property type="project" value="UniProtKB"/>
</dbReference>
<dbReference type="FunFam" id="3.30.70.330:FF:000905">
    <property type="entry name" value="RNA-binding family protein"/>
    <property type="match status" value="1"/>
</dbReference>
<dbReference type="Gene3D" id="3.30.70.330">
    <property type="match status" value="1"/>
</dbReference>
<dbReference type="InterPro" id="IPR012677">
    <property type="entry name" value="Nucleotide-bd_a/b_plait_sf"/>
</dbReference>
<dbReference type="InterPro" id="IPR035979">
    <property type="entry name" value="RBD_domain_sf"/>
</dbReference>
<dbReference type="InterPro" id="IPR000504">
    <property type="entry name" value="RRM_dom"/>
</dbReference>
<dbReference type="InterPro" id="IPR052462">
    <property type="entry name" value="SLIRP/GR-RBP-like"/>
</dbReference>
<dbReference type="PANTHER" id="PTHR48027">
    <property type="entry name" value="HETEROGENEOUS NUCLEAR RIBONUCLEOPROTEIN 87F-RELATED"/>
    <property type="match status" value="1"/>
</dbReference>
<dbReference type="Pfam" id="PF00076">
    <property type="entry name" value="RRM_1"/>
    <property type="match status" value="1"/>
</dbReference>
<dbReference type="SMART" id="SM00360">
    <property type="entry name" value="RRM"/>
    <property type="match status" value="1"/>
</dbReference>
<dbReference type="SUPFAM" id="SSF54928">
    <property type="entry name" value="RNA-binding domain, RBD"/>
    <property type="match status" value="1"/>
</dbReference>
<dbReference type="PROSITE" id="PS50102">
    <property type="entry name" value="RRM"/>
    <property type="match status" value="1"/>
</dbReference>
<evidence type="ECO:0000250" key="1">
    <source>
        <dbReference type="UniProtKB" id="Q8RWN5"/>
    </source>
</evidence>
<evidence type="ECO:0000255" key="2"/>
<evidence type="ECO:0000255" key="3">
    <source>
        <dbReference type="PROSITE-ProRule" id="PRU00176"/>
    </source>
</evidence>
<evidence type="ECO:0000269" key="4">
    <source>
    </source>
</evidence>
<evidence type="ECO:0000303" key="5">
    <source>
    </source>
</evidence>
<evidence type="ECO:0000312" key="6">
    <source>
        <dbReference type="Araport" id="AT5G06210"/>
    </source>
</evidence>
<evidence type="ECO:0000312" key="7">
    <source>
        <dbReference type="EMBL" id="BAB09686.1"/>
    </source>
</evidence>
<accession>Q9FFZ6</accession>
<reference key="1">
    <citation type="submission" date="2000-06" db="EMBL/GenBank/DDBJ databases">
        <title>Structural analysis of Arabidopsis thaliana chromosome 5. XI.</title>
        <authorList>
            <person name="Kaneko T."/>
            <person name="Katoh T."/>
            <person name="Asamizu E."/>
            <person name="Sato S."/>
            <person name="Nakamura Y."/>
            <person name="Kotani H."/>
            <person name="Tabata S."/>
        </authorList>
    </citation>
    <scope>NUCLEOTIDE SEQUENCE [LARGE SCALE GENOMIC DNA]</scope>
    <source>
        <strain>cv. Columbia</strain>
    </source>
</reference>
<reference key="2">
    <citation type="journal article" date="2017" name="Plant J.">
        <title>Araport11: a complete reannotation of the Arabidopsis thaliana reference genome.</title>
        <authorList>
            <person name="Cheng C.Y."/>
            <person name="Krishnakumar V."/>
            <person name="Chan A.P."/>
            <person name="Thibaud-Nissen F."/>
            <person name="Schobel S."/>
            <person name="Town C.D."/>
        </authorList>
    </citation>
    <scope>GENOME REANNOTATION</scope>
    <source>
        <strain>cv. Columbia</strain>
    </source>
</reference>
<reference key="3">
    <citation type="journal article" date="2003" name="Science">
        <title>Empirical analysis of transcriptional activity in the Arabidopsis genome.</title>
        <authorList>
            <person name="Yamada K."/>
            <person name="Lim J."/>
            <person name="Dale J.M."/>
            <person name="Chen H."/>
            <person name="Shinn P."/>
            <person name="Palm C.J."/>
            <person name="Southwick A.M."/>
            <person name="Wu H.C."/>
            <person name="Kim C.J."/>
            <person name="Nguyen M."/>
            <person name="Pham P.K."/>
            <person name="Cheuk R.F."/>
            <person name="Karlin-Newmann G."/>
            <person name="Liu S.X."/>
            <person name="Lam B."/>
            <person name="Sakano H."/>
            <person name="Wu T."/>
            <person name="Yu G."/>
            <person name="Miranda M."/>
            <person name="Quach H.L."/>
            <person name="Tripp M."/>
            <person name="Chang C.H."/>
            <person name="Lee J.M."/>
            <person name="Toriumi M.J."/>
            <person name="Chan M.M."/>
            <person name="Tang C.C."/>
            <person name="Onodera C.S."/>
            <person name="Deng J.M."/>
            <person name="Akiyama K."/>
            <person name="Ansari Y."/>
            <person name="Arakawa T."/>
            <person name="Banh J."/>
            <person name="Banno F."/>
            <person name="Bowser L."/>
            <person name="Brooks S.Y."/>
            <person name="Carninci P."/>
            <person name="Chao Q."/>
            <person name="Choy N."/>
            <person name="Enju A."/>
            <person name="Goldsmith A.D."/>
            <person name="Gurjal M."/>
            <person name="Hansen N.F."/>
            <person name="Hayashizaki Y."/>
            <person name="Johnson-Hopson C."/>
            <person name="Hsuan V.W."/>
            <person name="Iida K."/>
            <person name="Karnes M."/>
            <person name="Khan S."/>
            <person name="Koesema E."/>
            <person name="Ishida J."/>
            <person name="Jiang P.X."/>
            <person name="Jones T."/>
            <person name="Kawai J."/>
            <person name="Kamiya A."/>
            <person name="Meyers C."/>
            <person name="Nakajima M."/>
            <person name="Narusaka M."/>
            <person name="Seki M."/>
            <person name="Sakurai T."/>
            <person name="Satou M."/>
            <person name="Tamse R."/>
            <person name="Vaysberg M."/>
            <person name="Wallender E.K."/>
            <person name="Wong C."/>
            <person name="Yamamura Y."/>
            <person name="Yuan S."/>
            <person name="Shinozaki K."/>
            <person name="Davis R.W."/>
            <person name="Theologis A."/>
            <person name="Ecker J.R."/>
        </authorList>
    </citation>
    <scope>NUCLEOTIDE SEQUENCE [LARGE SCALE MRNA]</scope>
    <source>
        <strain>cv. Columbia</strain>
    </source>
</reference>
<reference key="4">
    <citation type="submission" date="2002-03" db="EMBL/GenBank/DDBJ databases">
        <title>Full-length cDNA from Arabidopsis thaliana.</title>
        <authorList>
            <person name="Brover V.V."/>
            <person name="Troukhan M.E."/>
            <person name="Alexandrov N.A."/>
            <person name="Lu Y.-P."/>
            <person name="Flavell R.B."/>
            <person name="Feldmann K.A."/>
        </authorList>
    </citation>
    <scope>NUCLEOTIDE SEQUENCE [LARGE SCALE MRNA]</scope>
</reference>
<reference key="5">
    <citation type="journal article" date="2014" name="Plant Cell Rep.">
        <title>The Arabidopsis chloroplast protein S-RBP11 is involved in oxidative and salt stress responses.</title>
        <authorList>
            <person name="Lee S.Y."/>
            <person name="Seok H.Y."/>
            <person name="Tarte V.N."/>
            <person name="Woo D.H."/>
            <person name="Le D.H."/>
            <person name="Lee E.H."/>
            <person name="Moon Y.H."/>
        </authorList>
    </citation>
    <scope>FUNCTION</scope>
    <scope>SUBCELLULAR LOCATION</scope>
    <scope>TISSUE SPECIFICITY</scope>
    <scope>INDUCTION BY METHYL VIOLOGEN</scope>
    <scope>DISRUPTION PHENOTYPE</scope>
</reference>
<proteinExistence type="evidence at transcript level"/>
<sequence length="146" mass="15422">MAALARIGGRHLKSVCLINSSASCFFTQRRGVASKLFIGGLSFCTTEQGLSEAFSKCGQVVEAQIVMDRVSDRSKGFGFVTFASADEAQKALMEFNGQQLNGRTIFVDYAKAKQSLGGGGGYPIARGPPDPAVIAATRTTETSKSD</sequence>
<comment type="function">
    <text evidence="4">Probable RNA-binding protein that may be involved in salt and oxidative stress tolerance.</text>
</comment>
<comment type="subcellular location">
    <subcellularLocation>
        <location evidence="4">Plastid</location>
        <location evidence="4">Chloroplast</location>
    </subcellularLocation>
</comment>
<comment type="tissue specificity">
    <text evidence="4">Expressed in rosette leaves, cauline leaves, stems and flowers.</text>
</comment>
<comment type="induction">
    <text evidence="4">Induced by methyl viologen.</text>
</comment>
<comment type="disruption phenotype">
    <text evidence="4">No visible phenotype under normal growth conditions, but mutant plants exhibit increased sensitivity to salt stress.</text>
</comment>
<protein>
    <recommendedName>
        <fullName evidence="5">Small RNA-binding protein 11, chloroplastic</fullName>
    </recommendedName>
</protein>
<gene>
    <name evidence="5" type="primary">S-RBP11</name>
    <name evidence="6" type="ordered locus">At5g06210</name>
    <name evidence="7" type="ORF">MBL20.9</name>
</gene>
<organism>
    <name type="scientific">Arabidopsis thaliana</name>
    <name type="common">Mouse-ear cress</name>
    <dbReference type="NCBI Taxonomy" id="3702"/>
    <lineage>
        <taxon>Eukaryota</taxon>
        <taxon>Viridiplantae</taxon>
        <taxon>Streptophyta</taxon>
        <taxon>Embryophyta</taxon>
        <taxon>Tracheophyta</taxon>
        <taxon>Spermatophyta</taxon>
        <taxon>Magnoliopsida</taxon>
        <taxon>eudicotyledons</taxon>
        <taxon>Gunneridae</taxon>
        <taxon>Pentapetalae</taxon>
        <taxon>rosids</taxon>
        <taxon>malvids</taxon>
        <taxon>Brassicales</taxon>
        <taxon>Brassicaceae</taxon>
        <taxon>Camelineae</taxon>
        <taxon>Arabidopsis</taxon>
    </lineage>
</organism>
<keyword id="KW-0150">Chloroplast</keyword>
<keyword id="KW-0597">Phosphoprotein</keyword>
<keyword id="KW-0934">Plastid</keyword>
<keyword id="KW-1185">Reference proteome</keyword>
<keyword id="KW-0694">RNA-binding</keyword>
<keyword id="KW-0346">Stress response</keyword>
<keyword id="KW-0809">Transit peptide</keyword>